<organism>
    <name type="scientific">Bartonella tribocorum (strain CIP 105476 / IBS 506)</name>
    <dbReference type="NCBI Taxonomy" id="382640"/>
    <lineage>
        <taxon>Bacteria</taxon>
        <taxon>Pseudomonadati</taxon>
        <taxon>Pseudomonadota</taxon>
        <taxon>Alphaproteobacteria</taxon>
        <taxon>Hyphomicrobiales</taxon>
        <taxon>Bartonellaceae</taxon>
        <taxon>Bartonella</taxon>
    </lineage>
</organism>
<sequence length="320" mass="33998">MVRKKIALIGSGMIGGTLAHIIGLKELGDVVLFDISEGMPQGKALDIAESSPIDGFDVHLKGANAYEAIEGADVVIVTAGVARKPGMSRDDLLGINLKVMEQVGAGIKKYAPSAFVICITNPLDAMVWALQKFSGLPVHKVVGMAGILDSARFRYFLSEEFKVSVKDVTAFVLGGHGDSMVPLVRYSTVGGISLPDLVKMGWTTQERIDQIIQRTRDGGAEVISLLKTGSAYYAPAASAVSMAEAYLKGTKRVVPVAAYLSGEYGVNDTYVGVPVVLGSGGVERVIEIDLDKEERDAFDYSVNAVKKLCEACIALVPSLK</sequence>
<comment type="function">
    <text evidence="1">Catalyzes the reversible oxidation of malate to oxaloacetate.</text>
</comment>
<comment type="catalytic activity">
    <reaction evidence="1">
        <text>(S)-malate + NAD(+) = oxaloacetate + NADH + H(+)</text>
        <dbReference type="Rhea" id="RHEA:21432"/>
        <dbReference type="ChEBI" id="CHEBI:15378"/>
        <dbReference type="ChEBI" id="CHEBI:15589"/>
        <dbReference type="ChEBI" id="CHEBI:16452"/>
        <dbReference type="ChEBI" id="CHEBI:57540"/>
        <dbReference type="ChEBI" id="CHEBI:57945"/>
        <dbReference type="EC" id="1.1.1.37"/>
    </reaction>
</comment>
<comment type="similarity">
    <text evidence="1">Belongs to the LDH/MDH superfamily. MDH type 3 family.</text>
</comment>
<evidence type="ECO:0000255" key="1">
    <source>
        <dbReference type="HAMAP-Rule" id="MF_00487"/>
    </source>
</evidence>
<feature type="chain" id="PRO_1000081353" description="Malate dehydrogenase">
    <location>
        <begin position="1"/>
        <end position="320"/>
    </location>
</feature>
<feature type="active site" description="Proton acceptor" evidence="1">
    <location>
        <position position="176"/>
    </location>
</feature>
<feature type="binding site" evidence="1">
    <location>
        <begin position="10"/>
        <end position="15"/>
    </location>
    <ligand>
        <name>NAD(+)</name>
        <dbReference type="ChEBI" id="CHEBI:57540"/>
    </ligand>
</feature>
<feature type="binding site" evidence="1">
    <location>
        <position position="34"/>
    </location>
    <ligand>
        <name>NAD(+)</name>
        <dbReference type="ChEBI" id="CHEBI:57540"/>
    </ligand>
</feature>
<feature type="binding site" evidence="1">
    <location>
        <position position="83"/>
    </location>
    <ligand>
        <name>substrate</name>
    </ligand>
</feature>
<feature type="binding site" evidence="1">
    <location>
        <position position="89"/>
    </location>
    <ligand>
        <name>substrate</name>
    </ligand>
</feature>
<feature type="binding site" evidence="1">
    <location>
        <position position="96"/>
    </location>
    <ligand>
        <name>NAD(+)</name>
        <dbReference type="ChEBI" id="CHEBI:57540"/>
    </ligand>
</feature>
<feature type="binding site" evidence="1">
    <location>
        <begin position="119"/>
        <end position="121"/>
    </location>
    <ligand>
        <name>NAD(+)</name>
        <dbReference type="ChEBI" id="CHEBI:57540"/>
    </ligand>
</feature>
<feature type="binding site" evidence="1">
    <location>
        <position position="121"/>
    </location>
    <ligand>
        <name>substrate</name>
    </ligand>
</feature>
<feature type="binding site" evidence="1">
    <location>
        <position position="152"/>
    </location>
    <ligand>
        <name>substrate</name>
    </ligand>
</feature>
<gene>
    <name evidence="1" type="primary">mdh</name>
    <name type="ordered locus">BT_2679</name>
</gene>
<reference key="1">
    <citation type="journal article" date="2007" name="Nat. Genet.">
        <title>Genomic analysis of Bartonella identifies type IV secretion systems as host adaptability factors.</title>
        <authorList>
            <person name="Saenz H.L."/>
            <person name="Engel P."/>
            <person name="Stoeckli M.C."/>
            <person name="Lanz C."/>
            <person name="Raddatz G."/>
            <person name="Vayssier-Taussat M."/>
            <person name="Birtles R."/>
            <person name="Schuster S.C."/>
            <person name="Dehio C."/>
        </authorList>
    </citation>
    <scope>NUCLEOTIDE SEQUENCE [LARGE SCALE GENOMIC DNA]</scope>
    <source>
        <strain>CIP 105476 / IBS 506</strain>
    </source>
</reference>
<dbReference type="EC" id="1.1.1.37" evidence="1"/>
<dbReference type="EMBL" id="AM260525">
    <property type="protein sequence ID" value="CAK02626.1"/>
    <property type="molecule type" value="Genomic_DNA"/>
</dbReference>
<dbReference type="RefSeq" id="WP_012232619.1">
    <property type="nucleotide sequence ID" value="NC_010161.1"/>
</dbReference>
<dbReference type="SMR" id="A9IZV5"/>
<dbReference type="KEGG" id="btr:BT_2679"/>
<dbReference type="eggNOG" id="COG0039">
    <property type="taxonomic scope" value="Bacteria"/>
</dbReference>
<dbReference type="HOGENOM" id="CLU_045401_2_1_5"/>
<dbReference type="Proteomes" id="UP000001592">
    <property type="component" value="Chromosome"/>
</dbReference>
<dbReference type="GO" id="GO:0004459">
    <property type="term" value="F:L-lactate dehydrogenase activity"/>
    <property type="evidence" value="ECO:0007669"/>
    <property type="project" value="TreeGrafter"/>
</dbReference>
<dbReference type="GO" id="GO:0030060">
    <property type="term" value="F:L-malate dehydrogenase (NAD+) activity"/>
    <property type="evidence" value="ECO:0007669"/>
    <property type="project" value="UniProtKB-UniRule"/>
</dbReference>
<dbReference type="GO" id="GO:0006089">
    <property type="term" value="P:lactate metabolic process"/>
    <property type="evidence" value="ECO:0007669"/>
    <property type="project" value="TreeGrafter"/>
</dbReference>
<dbReference type="GO" id="GO:0006099">
    <property type="term" value="P:tricarboxylic acid cycle"/>
    <property type="evidence" value="ECO:0007669"/>
    <property type="project" value="UniProtKB-UniRule"/>
</dbReference>
<dbReference type="CDD" id="cd01339">
    <property type="entry name" value="LDH-like_MDH"/>
    <property type="match status" value="1"/>
</dbReference>
<dbReference type="FunFam" id="3.40.50.720:FF:000018">
    <property type="entry name" value="Malate dehydrogenase"/>
    <property type="match status" value="1"/>
</dbReference>
<dbReference type="FunFam" id="3.90.110.10:FF:000004">
    <property type="entry name" value="Malate dehydrogenase"/>
    <property type="match status" value="1"/>
</dbReference>
<dbReference type="Gene3D" id="3.90.110.10">
    <property type="entry name" value="Lactate dehydrogenase/glycoside hydrolase, family 4, C-terminal"/>
    <property type="match status" value="1"/>
</dbReference>
<dbReference type="Gene3D" id="3.40.50.720">
    <property type="entry name" value="NAD(P)-binding Rossmann-like Domain"/>
    <property type="match status" value="1"/>
</dbReference>
<dbReference type="HAMAP" id="MF_00487">
    <property type="entry name" value="Malate_dehydrog_3"/>
    <property type="match status" value="1"/>
</dbReference>
<dbReference type="InterPro" id="IPR001557">
    <property type="entry name" value="L-lactate/malate_DH"/>
</dbReference>
<dbReference type="InterPro" id="IPR022383">
    <property type="entry name" value="Lactate/malate_DH_C"/>
</dbReference>
<dbReference type="InterPro" id="IPR001236">
    <property type="entry name" value="Lactate/malate_DH_N"/>
</dbReference>
<dbReference type="InterPro" id="IPR015955">
    <property type="entry name" value="Lactate_DH/Glyco_Ohase_4_C"/>
</dbReference>
<dbReference type="InterPro" id="IPR011275">
    <property type="entry name" value="Malate_DH_type3"/>
</dbReference>
<dbReference type="InterPro" id="IPR036291">
    <property type="entry name" value="NAD(P)-bd_dom_sf"/>
</dbReference>
<dbReference type="NCBIfam" id="TIGR01763">
    <property type="entry name" value="MalateDH_bact"/>
    <property type="match status" value="1"/>
</dbReference>
<dbReference type="NCBIfam" id="NF004863">
    <property type="entry name" value="PRK06223.1"/>
    <property type="match status" value="1"/>
</dbReference>
<dbReference type="PANTHER" id="PTHR43128">
    <property type="entry name" value="L-2-HYDROXYCARBOXYLATE DEHYDROGENASE (NAD(P)(+))"/>
    <property type="match status" value="1"/>
</dbReference>
<dbReference type="PANTHER" id="PTHR43128:SF16">
    <property type="entry name" value="L-LACTATE DEHYDROGENASE"/>
    <property type="match status" value="1"/>
</dbReference>
<dbReference type="Pfam" id="PF02866">
    <property type="entry name" value="Ldh_1_C"/>
    <property type="match status" value="1"/>
</dbReference>
<dbReference type="Pfam" id="PF00056">
    <property type="entry name" value="Ldh_1_N"/>
    <property type="match status" value="1"/>
</dbReference>
<dbReference type="PIRSF" id="PIRSF000102">
    <property type="entry name" value="Lac_mal_DH"/>
    <property type="match status" value="1"/>
</dbReference>
<dbReference type="PRINTS" id="PR00086">
    <property type="entry name" value="LLDHDRGNASE"/>
</dbReference>
<dbReference type="SUPFAM" id="SSF56327">
    <property type="entry name" value="LDH C-terminal domain-like"/>
    <property type="match status" value="1"/>
</dbReference>
<dbReference type="SUPFAM" id="SSF51735">
    <property type="entry name" value="NAD(P)-binding Rossmann-fold domains"/>
    <property type="match status" value="1"/>
</dbReference>
<protein>
    <recommendedName>
        <fullName evidence="1">Malate dehydrogenase</fullName>
        <ecNumber evidence="1">1.1.1.37</ecNumber>
    </recommendedName>
</protein>
<keyword id="KW-0520">NAD</keyword>
<keyword id="KW-0560">Oxidoreductase</keyword>
<keyword id="KW-0816">Tricarboxylic acid cycle</keyword>
<accession>A9IZV5</accession>
<name>MDH_BART1</name>
<proteinExistence type="inferred from homology"/>